<organism>
    <name type="scientific">Geobacillus kaustophilus (strain HTA426)</name>
    <dbReference type="NCBI Taxonomy" id="235909"/>
    <lineage>
        <taxon>Bacteria</taxon>
        <taxon>Bacillati</taxon>
        <taxon>Bacillota</taxon>
        <taxon>Bacilli</taxon>
        <taxon>Bacillales</taxon>
        <taxon>Anoxybacillaceae</taxon>
        <taxon>Geobacillus</taxon>
        <taxon>Geobacillus thermoleovorans group</taxon>
    </lineage>
</organism>
<evidence type="ECO:0000255" key="1">
    <source>
        <dbReference type="HAMAP-Rule" id="MF_00105"/>
    </source>
</evidence>
<sequence>MANEKQYPMTKEGKEKLEQELEYLKTVKRKEVVERIKIARGFGDLSENSEYDAAKDEQAFVESRIQMLENMIRNAVIIEEDKENPDVVSLGKSVTFIELPDGEEETYTIVGSAEADPFEGKISNDSPIAKSLLGRRVGDEVTVQTPGGEMLVKIVAVK</sequence>
<name>GREA_GEOKA</name>
<protein>
    <recommendedName>
        <fullName evidence="1">Transcription elongation factor GreA</fullName>
    </recommendedName>
    <alternativeName>
        <fullName evidence="1">Transcript cleavage factor GreA</fullName>
    </alternativeName>
</protein>
<proteinExistence type="inferred from homology"/>
<keyword id="KW-0175">Coiled coil</keyword>
<keyword id="KW-0238">DNA-binding</keyword>
<keyword id="KW-1185">Reference proteome</keyword>
<keyword id="KW-0804">Transcription</keyword>
<keyword id="KW-0805">Transcription regulation</keyword>
<gene>
    <name evidence="1" type="primary">greA</name>
    <name type="ordered locus">GK2547</name>
</gene>
<feature type="chain" id="PRO_1000034261" description="Transcription elongation factor GreA">
    <location>
        <begin position="1"/>
        <end position="158"/>
    </location>
</feature>
<feature type="coiled-coil region" evidence="1">
    <location>
        <begin position="10"/>
        <end position="75"/>
    </location>
</feature>
<reference key="1">
    <citation type="journal article" date="2004" name="Nucleic Acids Res.">
        <title>Thermoadaptation trait revealed by the genome sequence of thermophilic Geobacillus kaustophilus.</title>
        <authorList>
            <person name="Takami H."/>
            <person name="Takaki Y."/>
            <person name="Chee G.-J."/>
            <person name="Nishi S."/>
            <person name="Shimamura S."/>
            <person name="Suzuki H."/>
            <person name="Matsui S."/>
            <person name="Uchiyama I."/>
        </authorList>
    </citation>
    <scope>NUCLEOTIDE SEQUENCE [LARGE SCALE GENOMIC DNA]</scope>
    <source>
        <strain>HTA426</strain>
    </source>
</reference>
<comment type="function">
    <text evidence="1">Necessary for efficient RNA polymerase transcription elongation past template-encoded arresting sites. The arresting sites in DNA have the property of trapping a certain fraction of elongating RNA polymerases that pass through, resulting in locked ternary complexes. Cleavage of the nascent transcript by cleavage factors such as GreA or GreB allows the resumption of elongation from the new 3'terminus. GreA releases sequences of 2 to 3 nucleotides.</text>
</comment>
<comment type="similarity">
    <text evidence="1">Belongs to the GreA/GreB family.</text>
</comment>
<dbReference type="EMBL" id="BA000043">
    <property type="protein sequence ID" value="BAD76832.1"/>
    <property type="molecule type" value="Genomic_DNA"/>
</dbReference>
<dbReference type="RefSeq" id="WP_011232025.1">
    <property type="nucleotide sequence ID" value="NC_006510.1"/>
</dbReference>
<dbReference type="SMR" id="Q5KWV4"/>
<dbReference type="STRING" id="235909.GK2547"/>
<dbReference type="GeneID" id="89611256"/>
<dbReference type="KEGG" id="gka:GK2547"/>
<dbReference type="eggNOG" id="COG0782">
    <property type="taxonomic scope" value="Bacteria"/>
</dbReference>
<dbReference type="HOGENOM" id="CLU_101379_2_1_9"/>
<dbReference type="Proteomes" id="UP000001172">
    <property type="component" value="Chromosome"/>
</dbReference>
<dbReference type="GO" id="GO:0003677">
    <property type="term" value="F:DNA binding"/>
    <property type="evidence" value="ECO:0007669"/>
    <property type="project" value="UniProtKB-UniRule"/>
</dbReference>
<dbReference type="GO" id="GO:0070063">
    <property type="term" value="F:RNA polymerase binding"/>
    <property type="evidence" value="ECO:0007669"/>
    <property type="project" value="InterPro"/>
</dbReference>
<dbReference type="GO" id="GO:0006354">
    <property type="term" value="P:DNA-templated transcription elongation"/>
    <property type="evidence" value="ECO:0007669"/>
    <property type="project" value="TreeGrafter"/>
</dbReference>
<dbReference type="GO" id="GO:0032784">
    <property type="term" value="P:regulation of DNA-templated transcription elongation"/>
    <property type="evidence" value="ECO:0007669"/>
    <property type="project" value="UniProtKB-UniRule"/>
</dbReference>
<dbReference type="FunFam" id="1.10.287.180:FF:000001">
    <property type="entry name" value="Transcription elongation factor GreA"/>
    <property type="match status" value="1"/>
</dbReference>
<dbReference type="FunFam" id="3.10.50.30:FF:000001">
    <property type="entry name" value="Transcription elongation factor GreA"/>
    <property type="match status" value="1"/>
</dbReference>
<dbReference type="Gene3D" id="3.10.50.30">
    <property type="entry name" value="Transcription elongation factor, GreA/GreB, C-terminal domain"/>
    <property type="match status" value="1"/>
</dbReference>
<dbReference type="Gene3D" id="1.10.287.180">
    <property type="entry name" value="Transcription elongation factor, GreA/GreB, N-terminal domain"/>
    <property type="match status" value="1"/>
</dbReference>
<dbReference type="HAMAP" id="MF_00105">
    <property type="entry name" value="GreA_GreB"/>
    <property type="match status" value="1"/>
</dbReference>
<dbReference type="InterPro" id="IPR036953">
    <property type="entry name" value="GreA/GreB_C_sf"/>
</dbReference>
<dbReference type="InterPro" id="IPR018151">
    <property type="entry name" value="TF_GreA/GreB_CS"/>
</dbReference>
<dbReference type="InterPro" id="IPR006359">
    <property type="entry name" value="Tscrpt_elong_fac_GreA"/>
</dbReference>
<dbReference type="InterPro" id="IPR028624">
    <property type="entry name" value="Tscrpt_elong_fac_GreA/B"/>
</dbReference>
<dbReference type="InterPro" id="IPR001437">
    <property type="entry name" value="Tscrpt_elong_fac_GreA/B_C"/>
</dbReference>
<dbReference type="InterPro" id="IPR023459">
    <property type="entry name" value="Tscrpt_elong_fac_GreA/B_fam"/>
</dbReference>
<dbReference type="InterPro" id="IPR022691">
    <property type="entry name" value="Tscrpt_elong_fac_GreA/B_N"/>
</dbReference>
<dbReference type="InterPro" id="IPR036805">
    <property type="entry name" value="Tscrpt_elong_fac_GreA/B_N_sf"/>
</dbReference>
<dbReference type="NCBIfam" id="TIGR01462">
    <property type="entry name" value="greA"/>
    <property type="match status" value="1"/>
</dbReference>
<dbReference type="NCBIfam" id="NF001261">
    <property type="entry name" value="PRK00226.1-2"/>
    <property type="match status" value="1"/>
</dbReference>
<dbReference type="NCBIfam" id="NF001263">
    <property type="entry name" value="PRK00226.1-4"/>
    <property type="match status" value="1"/>
</dbReference>
<dbReference type="PANTHER" id="PTHR30437">
    <property type="entry name" value="TRANSCRIPTION ELONGATION FACTOR GREA"/>
    <property type="match status" value="1"/>
</dbReference>
<dbReference type="PANTHER" id="PTHR30437:SF4">
    <property type="entry name" value="TRANSCRIPTION ELONGATION FACTOR GREA"/>
    <property type="match status" value="1"/>
</dbReference>
<dbReference type="Pfam" id="PF01272">
    <property type="entry name" value="GreA_GreB"/>
    <property type="match status" value="1"/>
</dbReference>
<dbReference type="Pfam" id="PF03449">
    <property type="entry name" value="GreA_GreB_N"/>
    <property type="match status" value="1"/>
</dbReference>
<dbReference type="PIRSF" id="PIRSF006092">
    <property type="entry name" value="GreA_GreB"/>
    <property type="match status" value="1"/>
</dbReference>
<dbReference type="SUPFAM" id="SSF54534">
    <property type="entry name" value="FKBP-like"/>
    <property type="match status" value="1"/>
</dbReference>
<dbReference type="SUPFAM" id="SSF46557">
    <property type="entry name" value="GreA transcript cleavage protein, N-terminal domain"/>
    <property type="match status" value="1"/>
</dbReference>
<dbReference type="PROSITE" id="PS00829">
    <property type="entry name" value="GREAB_1"/>
    <property type="match status" value="1"/>
</dbReference>
<dbReference type="PROSITE" id="PS00830">
    <property type="entry name" value="GREAB_2"/>
    <property type="match status" value="1"/>
</dbReference>
<accession>Q5KWV4</accession>